<keyword id="KW-0997">Cell inner membrane</keyword>
<keyword id="KW-1003">Cell membrane</keyword>
<keyword id="KW-0407">Ion channel</keyword>
<keyword id="KW-0406">Ion transport</keyword>
<keyword id="KW-0472">Membrane</keyword>
<keyword id="KW-0479">Metal-binding</keyword>
<keyword id="KW-1185">Reference proteome</keyword>
<keyword id="KW-0915">Sodium</keyword>
<keyword id="KW-0812">Transmembrane</keyword>
<keyword id="KW-1133">Transmembrane helix</keyword>
<keyword id="KW-0813">Transport</keyword>
<accession>Q8VM97</accession>
<accession>Q0K9G3</accession>
<proteinExistence type="inferred from homology"/>
<comment type="function">
    <text evidence="1">Fluoride-specific ion channel. Important for reducing fluoride concentration in the cell, thus reducing its toxicity.</text>
</comment>
<comment type="catalytic activity">
    <reaction evidence="1">
        <text>fluoride(in) = fluoride(out)</text>
        <dbReference type="Rhea" id="RHEA:76159"/>
        <dbReference type="ChEBI" id="CHEBI:17051"/>
    </reaction>
    <physiologicalReaction direction="left-to-right" evidence="1">
        <dbReference type="Rhea" id="RHEA:76160"/>
    </physiologicalReaction>
</comment>
<comment type="activity regulation">
    <text evidence="1">Na(+) is not transported, but it plays an essential structural role and its presence is essential for fluoride channel function.</text>
</comment>
<comment type="subcellular location">
    <subcellularLocation>
        <location evidence="1">Cell inner membrane</location>
        <topology evidence="1">Multi-pass membrane protein</topology>
    </subcellularLocation>
</comment>
<comment type="similarity">
    <text evidence="1">Belongs to the fluoride channel Fluc/FEX (TC 1.A.43) family.</text>
</comment>
<sequence>MGPLGFVAVGVGAAAGAWLRWGFAVLWNAINPALPYGTLAANLLGGYLVGLAVGFFDTHAGLPPEWRLLAITGFLGGLTTFSTFSSEVVANLIAGDYGWAGLHLLLHLGGSLLLTAFGLWTYRLLA</sequence>
<dbReference type="EMBL" id="AJ279073">
    <property type="protein sequence ID" value="CAC82490.1"/>
    <property type="molecule type" value="Genomic_DNA"/>
</dbReference>
<dbReference type="EMBL" id="AM260479">
    <property type="protein sequence ID" value="CAJ93358.1"/>
    <property type="molecule type" value="Genomic_DNA"/>
</dbReference>
<dbReference type="RefSeq" id="WP_010810480.1">
    <property type="nucleotide sequence ID" value="NZ_CP039287.1"/>
</dbReference>
<dbReference type="SMR" id="Q8VM97"/>
<dbReference type="STRING" id="381666.H16_A2261"/>
<dbReference type="KEGG" id="reh:H16_A2261"/>
<dbReference type="eggNOG" id="COG0239">
    <property type="taxonomic scope" value="Bacteria"/>
</dbReference>
<dbReference type="HOGENOM" id="CLU_114342_3_3_4"/>
<dbReference type="Proteomes" id="UP000008210">
    <property type="component" value="Chromosome 1"/>
</dbReference>
<dbReference type="GO" id="GO:0005886">
    <property type="term" value="C:plasma membrane"/>
    <property type="evidence" value="ECO:0007669"/>
    <property type="project" value="UniProtKB-SubCell"/>
</dbReference>
<dbReference type="GO" id="GO:0062054">
    <property type="term" value="F:fluoride channel activity"/>
    <property type="evidence" value="ECO:0007669"/>
    <property type="project" value="UniProtKB-UniRule"/>
</dbReference>
<dbReference type="GO" id="GO:0046872">
    <property type="term" value="F:metal ion binding"/>
    <property type="evidence" value="ECO:0007669"/>
    <property type="project" value="UniProtKB-KW"/>
</dbReference>
<dbReference type="GO" id="GO:0140114">
    <property type="term" value="P:cellular detoxification of fluoride"/>
    <property type="evidence" value="ECO:0007669"/>
    <property type="project" value="UniProtKB-UniRule"/>
</dbReference>
<dbReference type="HAMAP" id="MF_00454">
    <property type="entry name" value="FluC"/>
    <property type="match status" value="1"/>
</dbReference>
<dbReference type="InterPro" id="IPR003691">
    <property type="entry name" value="FluC"/>
</dbReference>
<dbReference type="NCBIfam" id="TIGR00494">
    <property type="entry name" value="crcB"/>
    <property type="match status" value="1"/>
</dbReference>
<dbReference type="NCBIfam" id="NF010792">
    <property type="entry name" value="PRK14196.1"/>
    <property type="match status" value="1"/>
</dbReference>
<dbReference type="PANTHER" id="PTHR28259">
    <property type="entry name" value="FLUORIDE EXPORT PROTEIN 1-RELATED"/>
    <property type="match status" value="1"/>
</dbReference>
<dbReference type="PANTHER" id="PTHR28259:SF1">
    <property type="entry name" value="FLUORIDE EXPORT PROTEIN 1-RELATED"/>
    <property type="match status" value="1"/>
</dbReference>
<dbReference type="Pfam" id="PF02537">
    <property type="entry name" value="CRCB"/>
    <property type="match status" value="1"/>
</dbReference>
<gene>
    <name evidence="1" type="primary">fluC</name>
    <name evidence="1" type="synonym">crcB</name>
    <name type="synonym">moaF</name>
    <name type="ordered locus">H16_A2261</name>
</gene>
<name>FLUC_CUPNH</name>
<feature type="chain" id="PRO_0000110035" description="Fluoride-specific ion channel FluC">
    <location>
        <begin position="1"/>
        <end position="126"/>
    </location>
</feature>
<feature type="transmembrane region" description="Helical" evidence="1">
    <location>
        <begin position="6"/>
        <end position="26"/>
    </location>
</feature>
<feature type="transmembrane region" description="Helical" evidence="1">
    <location>
        <begin position="36"/>
        <end position="56"/>
    </location>
</feature>
<feature type="transmembrane region" description="Helical" evidence="1">
    <location>
        <begin position="69"/>
        <end position="89"/>
    </location>
</feature>
<feature type="transmembrane region" description="Helical" evidence="1">
    <location>
        <begin position="99"/>
        <end position="119"/>
    </location>
</feature>
<feature type="binding site" evidence="1">
    <location>
        <position position="76"/>
    </location>
    <ligand>
        <name>Na(+)</name>
        <dbReference type="ChEBI" id="CHEBI:29101"/>
        <note>structural</note>
    </ligand>
</feature>
<feature type="binding site" evidence="1">
    <location>
        <position position="79"/>
    </location>
    <ligand>
        <name>Na(+)</name>
        <dbReference type="ChEBI" id="CHEBI:29101"/>
        <note>structural</note>
    </ligand>
</feature>
<organism>
    <name type="scientific">Cupriavidus necator (strain ATCC 17699 / DSM 428 / KCTC 22496 / NCIMB 10442 / H16 / Stanier 337)</name>
    <name type="common">Ralstonia eutropha</name>
    <dbReference type="NCBI Taxonomy" id="381666"/>
    <lineage>
        <taxon>Bacteria</taxon>
        <taxon>Pseudomonadati</taxon>
        <taxon>Pseudomonadota</taxon>
        <taxon>Betaproteobacteria</taxon>
        <taxon>Burkholderiales</taxon>
        <taxon>Burkholderiaceae</taxon>
        <taxon>Cupriavidus</taxon>
    </lineage>
</organism>
<protein>
    <recommendedName>
        <fullName evidence="1">Fluoride-specific ion channel FluC</fullName>
    </recommendedName>
</protein>
<reference key="1">
    <citation type="journal article" date="2001" name="J. Mol. Microbiol. Biotechnol.">
        <title>Involvement of an unusual mol operon in molybdopterin cofactor biosynthesis in Ralstonia eutropha.</title>
        <authorList>
            <person name="Burgdorf T."/>
            <person name="Bommer D."/>
            <person name="Bowien B."/>
        </authorList>
    </citation>
    <scope>NUCLEOTIDE SEQUENCE [GENOMIC DNA]</scope>
</reference>
<reference key="2">
    <citation type="journal article" date="2006" name="Nat. Biotechnol.">
        <title>Genome sequence of the bioplastic-producing 'Knallgas' bacterium Ralstonia eutropha H16.</title>
        <authorList>
            <person name="Pohlmann A."/>
            <person name="Fricke W.F."/>
            <person name="Reinecke F."/>
            <person name="Kusian B."/>
            <person name="Liesegang H."/>
            <person name="Cramm R."/>
            <person name="Eitinger T."/>
            <person name="Ewering C."/>
            <person name="Poetter M."/>
            <person name="Schwartz E."/>
            <person name="Strittmatter A."/>
            <person name="Voss I."/>
            <person name="Gottschalk G."/>
            <person name="Steinbuechel A."/>
            <person name="Friedrich B."/>
            <person name="Bowien B."/>
        </authorList>
    </citation>
    <scope>NUCLEOTIDE SEQUENCE [LARGE SCALE GENOMIC DNA]</scope>
    <source>
        <strain>ATCC 17699 / DSM 428 / KCTC 22496 / NCIMB 10442 / H16 / Stanier 337</strain>
    </source>
</reference>
<evidence type="ECO:0000255" key="1">
    <source>
        <dbReference type="HAMAP-Rule" id="MF_00454"/>
    </source>
</evidence>